<gene>
    <name type="primary">Glt8d2</name>
</gene>
<accession>Q640P4</accession>
<accession>Q9D163</accession>
<organism>
    <name type="scientific">Mus musculus</name>
    <name type="common">Mouse</name>
    <dbReference type="NCBI Taxonomy" id="10090"/>
    <lineage>
        <taxon>Eukaryota</taxon>
        <taxon>Metazoa</taxon>
        <taxon>Chordata</taxon>
        <taxon>Craniata</taxon>
        <taxon>Vertebrata</taxon>
        <taxon>Euteleostomi</taxon>
        <taxon>Mammalia</taxon>
        <taxon>Eutheria</taxon>
        <taxon>Euarchontoglires</taxon>
        <taxon>Glires</taxon>
        <taxon>Rodentia</taxon>
        <taxon>Myomorpha</taxon>
        <taxon>Muroidea</taxon>
        <taxon>Muridae</taxon>
        <taxon>Murinae</taxon>
        <taxon>Mus</taxon>
        <taxon>Mus</taxon>
    </lineage>
</organism>
<comment type="subcellular location">
    <subcellularLocation>
        <location evidence="2">Membrane</location>
        <topology evidence="2">Single-pass type II membrane protein</topology>
    </subcellularLocation>
</comment>
<comment type="similarity">
    <text evidence="2">Belongs to the glycosyltransferase 8 family.</text>
</comment>
<dbReference type="EC" id="2.4.1.-"/>
<dbReference type="EMBL" id="AK003894">
    <property type="protein sequence ID" value="BAB23061.1"/>
    <property type="molecule type" value="mRNA"/>
</dbReference>
<dbReference type="EMBL" id="BC082561">
    <property type="protein sequence ID" value="AAH82561.1"/>
    <property type="molecule type" value="mRNA"/>
</dbReference>
<dbReference type="CCDS" id="CCDS24071.1"/>
<dbReference type="RefSeq" id="NP_083378.3">
    <property type="nucleotide sequence ID" value="NM_029102.4"/>
</dbReference>
<dbReference type="SMR" id="Q640P4"/>
<dbReference type="BioGRID" id="217016">
    <property type="interactions" value="2"/>
</dbReference>
<dbReference type="FunCoup" id="Q640P4">
    <property type="interactions" value="351"/>
</dbReference>
<dbReference type="STRING" id="10090.ENSMUSP00000020485"/>
<dbReference type="CAZy" id="GT8">
    <property type="family name" value="Glycosyltransferase Family 8"/>
</dbReference>
<dbReference type="GlyCosmos" id="Q640P4">
    <property type="glycosylation" value="1 site, No reported glycans"/>
</dbReference>
<dbReference type="GlyGen" id="Q640P4">
    <property type="glycosylation" value="1 site"/>
</dbReference>
<dbReference type="iPTMnet" id="Q640P4"/>
<dbReference type="PhosphoSitePlus" id="Q640P4"/>
<dbReference type="PaxDb" id="10090-ENSMUSP00000020485"/>
<dbReference type="ProteomicsDB" id="266807"/>
<dbReference type="Pumba" id="Q640P4"/>
<dbReference type="DNASU" id="74782"/>
<dbReference type="Ensembl" id="ENSMUST00000020485.11">
    <property type="protein sequence ID" value="ENSMUSP00000020485.5"/>
    <property type="gene ID" value="ENSMUSG00000020251.15"/>
</dbReference>
<dbReference type="GeneID" id="74782"/>
<dbReference type="KEGG" id="mmu:74782"/>
<dbReference type="AGR" id="MGI:1922032"/>
<dbReference type="CTD" id="83468"/>
<dbReference type="MGI" id="MGI:1922032">
    <property type="gene designation" value="Glt8d2"/>
</dbReference>
<dbReference type="eggNOG" id="ENOG502QTN8">
    <property type="taxonomic scope" value="Eukaryota"/>
</dbReference>
<dbReference type="GeneTree" id="ENSGT00940000158078"/>
<dbReference type="InParanoid" id="Q640P4"/>
<dbReference type="PhylomeDB" id="Q640P4"/>
<dbReference type="BioGRID-ORCS" id="74782">
    <property type="hits" value="0 hits in 78 CRISPR screens"/>
</dbReference>
<dbReference type="ChiTaRS" id="Glt8d2">
    <property type="organism name" value="mouse"/>
</dbReference>
<dbReference type="PRO" id="PR:Q640P4"/>
<dbReference type="Proteomes" id="UP000000589">
    <property type="component" value="Chromosome 10"/>
</dbReference>
<dbReference type="RNAct" id="Q640P4">
    <property type="molecule type" value="protein"/>
</dbReference>
<dbReference type="GO" id="GO:0016020">
    <property type="term" value="C:membrane"/>
    <property type="evidence" value="ECO:0007669"/>
    <property type="project" value="UniProtKB-SubCell"/>
</dbReference>
<dbReference type="GO" id="GO:0008194">
    <property type="term" value="F:UDP-glycosyltransferase activity"/>
    <property type="evidence" value="ECO:0007669"/>
    <property type="project" value="UniProtKB-ARBA"/>
</dbReference>
<dbReference type="FunFam" id="3.90.550.10:FF:000078">
    <property type="entry name" value="glycosyltransferase 8 domain-containing protein 2"/>
    <property type="match status" value="1"/>
</dbReference>
<dbReference type="Gene3D" id="3.90.550.10">
    <property type="entry name" value="Spore Coat Polysaccharide Biosynthesis Protein SpsA, Chain A"/>
    <property type="match status" value="1"/>
</dbReference>
<dbReference type="InterPro" id="IPR002495">
    <property type="entry name" value="Glyco_trans_8"/>
</dbReference>
<dbReference type="InterPro" id="IPR050748">
    <property type="entry name" value="Glycosyltrans_8_dom-fam"/>
</dbReference>
<dbReference type="InterPro" id="IPR029044">
    <property type="entry name" value="Nucleotide-diphossugar_trans"/>
</dbReference>
<dbReference type="PANTHER" id="PTHR13778">
    <property type="entry name" value="GLYCOSYLTRANSFERASE 8 DOMAIN-CONTAINING PROTEIN"/>
    <property type="match status" value="1"/>
</dbReference>
<dbReference type="PANTHER" id="PTHR13778:SF2">
    <property type="entry name" value="GLYCOSYLTRANSFERASE 8 DOMAIN-CONTAINING PROTEIN 2"/>
    <property type="match status" value="1"/>
</dbReference>
<dbReference type="Pfam" id="PF01501">
    <property type="entry name" value="Glyco_transf_8"/>
    <property type="match status" value="1"/>
</dbReference>
<dbReference type="SUPFAM" id="SSF53448">
    <property type="entry name" value="Nucleotide-diphospho-sugar transferases"/>
    <property type="match status" value="1"/>
</dbReference>
<protein>
    <recommendedName>
        <fullName>Glycosyltransferase 8 domain-containing protein 2</fullName>
        <ecNumber>2.4.1.-</ecNumber>
    </recommendedName>
</protein>
<proteinExistence type="evidence at transcript level"/>
<evidence type="ECO:0000255" key="1"/>
<evidence type="ECO:0000305" key="2"/>
<sequence length="349" mass="39933">MAFLRKVNQVLLLLLVLTLCGILYKKVHKGAVLKDKADVDSESPEDMEEEIPVVICAAAGRMGAAMAAINSIYSNTDANLVFYVVGLRSTLPRIRKWIEHSKLREINFKIVEFNPTVLKGKIRPDSSRPELLQPLNFVRFYLPLLVHQHEKVIYLDDDVIVQGDIQELYDTTLALGHAAAFSDDCDLPSAQDIHRLVGLQNTYMGYLDYRKKTIKDLGISPSTCSFNPGVIVANMTEWKHQRITKQLEKWMQKNVEENLYSSSLGGGVATSPMLIVFHGKYSTINPLWHIRHLGWNPDARYSEHFLQEAKLLHWNGRHKPWDFPSVHNDLWESWFVPDPAGIFKLHHNR</sequence>
<name>GL8D2_MOUSE</name>
<keyword id="KW-0325">Glycoprotein</keyword>
<keyword id="KW-0328">Glycosyltransferase</keyword>
<keyword id="KW-0472">Membrane</keyword>
<keyword id="KW-1185">Reference proteome</keyword>
<keyword id="KW-0735">Signal-anchor</keyword>
<keyword id="KW-0808">Transferase</keyword>
<keyword id="KW-0812">Transmembrane</keyword>
<keyword id="KW-1133">Transmembrane helix</keyword>
<feature type="chain" id="PRO_0000271384" description="Glycosyltransferase 8 domain-containing protein 2">
    <location>
        <begin position="1"/>
        <end position="349"/>
    </location>
</feature>
<feature type="topological domain" description="Cytoplasmic" evidence="1">
    <location>
        <begin position="1"/>
        <end position="6"/>
    </location>
</feature>
<feature type="transmembrane region" description="Helical; Signal-anchor for type II membrane protein" evidence="1">
    <location>
        <begin position="7"/>
        <end position="24"/>
    </location>
</feature>
<feature type="topological domain" description="Lumenal" evidence="1">
    <location>
        <begin position="25"/>
        <end position="349"/>
    </location>
</feature>
<feature type="glycosylation site" description="N-linked (GlcNAc...) asparagine" evidence="1">
    <location>
        <position position="234"/>
    </location>
</feature>
<feature type="sequence conflict" description="In Ref. 2; BAB23061." evidence="2" ref="2">
    <original>I</original>
    <variation>V</variation>
    <location>
        <position position="243"/>
    </location>
</feature>
<reference key="1">
    <citation type="journal article" date="2005" name="Science">
        <title>The transcriptional landscape of the mammalian genome.</title>
        <authorList>
            <person name="Carninci P."/>
            <person name="Kasukawa T."/>
            <person name="Katayama S."/>
            <person name="Gough J."/>
            <person name="Frith M.C."/>
            <person name="Maeda N."/>
            <person name="Oyama R."/>
            <person name="Ravasi T."/>
            <person name="Lenhard B."/>
            <person name="Wells C."/>
            <person name="Kodzius R."/>
            <person name="Shimokawa K."/>
            <person name="Bajic V.B."/>
            <person name="Brenner S.E."/>
            <person name="Batalov S."/>
            <person name="Forrest A.R."/>
            <person name="Zavolan M."/>
            <person name="Davis M.J."/>
            <person name="Wilming L.G."/>
            <person name="Aidinis V."/>
            <person name="Allen J.E."/>
            <person name="Ambesi-Impiombato A."/>
            <person name="Apweiler R."/>
            <person name="Aturaliya R.N."/>
            <person name="Bailey T.L."/>
            <person name="Bansal M."/>
            <person name="Baxter L."/>
            <person name="Beisel K.W."/>
            <person name="Bersano T."/>
            <person name="Bono H."/>
            <person name="Chalk A.M."/>
            <person name="Chiu K.P."/>
            <person name="Choudhary V."/>
            <person name="Christoffels A."/>
            <person name="Clutterbuck D.R."/>
            <person name="Crowe M.L."/>
            <person name="Dalla E."/>
            <person name="Dalrymple B.P."/>
            <person name="de Bono B."/>
            <person name="Della Gatta G."/>
            <person name="di Bernardo D."/>
            <person name="Down T."/>
            <person name="Engstrom P."/>
            <person name="Fagiolini M."/>
            <person name="Faulkner G."/>
            <person name="Fletcher C.F."/>
            <person name="Fukushima T."/>
            <person name="Furuno M."/>
            <person name="Futaki S."/>
            <person name="Gariboldi M."/>
            <person name="Georgii-Hemming P."/>
            <person name="Gingeras T.R."/>
            <person name="Gojobori T."/>
            <person name="Green R.E."/>
            <person name="Gustincich S."/>
            <person name="Harbers M."/>
            <person name="Hayashi Y."/>
            <person name="Hensch T.K."/>
            <person name="Hirokawa N."/>
            <person name="Hill D."/>
            <person name="Huminiecki L."/>
            <person name="Iacono M."/>
            <person name="Ikeo K."/>
            <person name="Iwama A."/>
            <person name="Ishikawa T."/>
            <person name="Jakt M."/>
            <person name="Kanapin A."/>
            <person name="Katoh M."/>
            <person name="Kawasawa Y."/>
            <person name="Kelso J."/>
            <person name="Kitamura H."/>
            <person name="Kitano H."/>
            <person name="Kollias G."/>
            <person name="Krishnan S.P."/>
            <person name="Kruger A."/>
            <person name="Kummerfeld S.K."/>
            <person name="Kurochkin I.V."/>
            <person name="Lareau L.F."/>
            <person name="Lazarevic D."/>
            <person name="Lipovich L."/>
            <person name="Liu J."/>
            <person name="Liuni S."/>
            <person name="McWilliam S."/>
            <person name="Madan Babu M."/>
            <person name="Madera M."/>
            <person name="Marchionni L."/>
            <person name="Matsuda H."/>
            <person name="Matsuzawa S."/>
            <person name="Miki H."/>
            <person name="Mignone F."/>
            <person name="Miyake S."/>
            <person name="Morris K."/>
            <person name="Mottagui-Tabar S."/>
            <person name="Mulder N."/>
            <person name="Nakano N."/>
            <person name="Nakauchi H."/>
            <person name="Ng P."/>
            <person name="Nilsson R."/>
            <person name="Nishiguchi S."/>
            <person name="Nishikawa S."/>
            <person name="Nori F."/>
            <person name="Ohara O."/>
            <person name="Okazaki Y."/>
            <person name="Orlando V."/>
            <person name="Pang K.C."/>
            <person name="Pavan W.J."/>
            <person name="Pavesi G."/>
            <person name="Pesole G."/>
            <person name="Petrovsky N."/>
            <person name="Piazza S."/>
            <person name="Reed J."/>
            <person name="Reid J.F."/>
            <person name="Ring B.Z."/>
            <person name="Ringwald M."/>
            <person name="Rost B."/>
            <person name="Ruan Y."/>
            <person name="Salzberg S.L."/>
            <person name="Sandelin A."/>
            <person name="Schneider C."/>
            <person name="Schoenbach C."/>
            <person name="Sekiguchi K."/>
            <person name="Semple C.A."/>
            <person name="Seno S."/>
            <person name="Sessa L."/>
            <person name="Sheng Y."/>
            <person name="Shibata Y."/>
            <person name="Shimada H."/>
            <person name="Shimada K."/>
            <person name="Silva D."/>
            <person name="Sinclair B."/>
            <person name="Sperling S."/>
            <person name="Stupka E."/>
            <person name="Sugiura K."/>
            <person name="Sultana R."/>
            <person name="Takenaka Y."/>
            <person name="Taki K."/>
            <person name="Tammoja K."/>
            <person name="Tan S.L."/>
            <person name="Tang S."/>
            <person name="Taylor M.S."/>
            <person name="Tegner J."/>
            <person name="Teichmann S.A."/>
            <person name="Ueda H.R."/>
            <person name="van Nimwegen E."/>
            <person name="Verardo R."/>
            <person name="Wei C.L."/>
            <person name="Yagi K."/>
            <person name="Yamanishi H."/>
            <person name="Zabarovsky E."/>
            <person name="Zhu S."/>
            <person name="Zimmer A."/>
            <person name="Hide W."/>
            <person name="Bult C."/>
            <person name="Grimmond S.M."/>
            <person name="Teasdale R.D."/>
            <person name="Liu E.T."/>
            <person name="Brusic V."/>
            <person name="Quackenbush J."/>
            <person name="Wahlestedt C."/>
            <person name="Mattick J.S."/>
            <person name="Hume D.A."/>
            <person name="Kai C."/>
            <person name="Sasaki D."/>
            <person name="Tomaru Y."/>
            <person name="Fukuda S."/>
            <person name="Kanamori-Katayama M."/>
            <person name="Suzuki M."/>
            <person name="Aoki J."/>
            <person name="Arakawa T."/>
            <person name="Iida J."/>
            <person name="Imamura K."/>
            <person name="Itoh M."/>
            <person name="Kato T."/>
            <person name="Kawaji H."/>
            <person name="Kawagashira N."/>
            <person name="Kawashima T."/>
            <person name="Kojima M."/>
            <person name="Kondo S."/>
            <person name="Konno H."/>
            <person name="Nakano K."/>
            <person name="Ninomiya N."/>
            <person name="Nishio T."/>
            <person name="Okada M."/>
            <person name="Plessy C."/>
            <person name="Shibata K."/>
            <person name="Shiraki T."/>
            <person name="Suzuki S."/>
            <person name="Tagami M."/>
            <person name="Waki K."/>
            <person name="Watahiki A."/>
            <person name="Okamura-Oho Y."/>
            <person name="Suzuki H."/>
            <person name="Kawai J."/>
            <person name="Hayashizaki Y."/>
        </authorList>
    </citation>
    <scope>NUCLEOTIDE SEQUENCE [LARGE SCALE MRNA]</scope>
    <source>
        <strain>C57BL/6J</strain>
    </source>
</reference>
<reference key="2">
    <citation type="journal article" date="2004" name="Genome Res.">
        <title>The status, quality, and expansion of the NIH full-length cDNA project: the Mammalian Gene Collection (MGC).</title>
        <authorList>
            <consortium name="The MGC Project Team"/>
        </authorList>
    </citation>
    <scope>NUCLEOTIDE SEQUENCE [LARGE SCALE MRNA]</scope>
    <source>
        <strain>C57BL/6J</strain>
        <tissue>Eye</tissue>
    </source>
</reference>